<accession>Q5Q0H2</accession>
<accession>Q9XI50</accession>
<sequence length="248" mass="26736">MAKISSASCFRAIFLGALIILCLPHPSTGVPLEELERAIAILRVRGRALFANAIITSDLLFDLLSDESLTLFAPTDSMLFDLDMTHSLPFYVSTLRLHSVPLRLSLSGLRSLPNSSSLPTLLPSHRLLLTKHSSSNDSIFLDGVQLLIPGLFDGQHIAVHGLADLLPLTAPSSPNRLVEDSTALAKSPWFLGSRFSPAPEPYFAFMDLSPAESPSVEEVSPSPSWGEGEEDFIVGDEGGPLDGRNNGF</sequence>
<proteinExistence type="evidence at transcript level"/>
<dbReference type="EMBL" id="AC007591">
    <property type="protein sequence ID" value="AAD39647.1"/>
    <property type="molecule type" value="Genomic_DNA"/>
</dbReference>
<dbReference type="EMBL" id="CP002684">
    <property type="protein sequence ID" value="AEE29280.1"/>
    <property type="molecule type" value="Genomic_DNA"/>
</dbReference>
<dbReference type="EMBL" id="AY924669">
    <property type="protein sequence ID" value="AAX23744.1"/>
    <property type="molecule type" value="Genomic_DNA"/>
</dbReference>
<dbReference type="EMBL" id="AY800579">
    <property type="protein sequence ID" value="AAV68815.1"/>
    <property type="molecule type" value="mRNA"/>
</dbReference>
<dbReference type="PIR" id="H86285">
    <property type="entry name" value="H86285"/>
</dbReference>
<dbReference type="RefSeq" id="NP_172971.1">
    <property type="nucleotide sequence ID" value="NM_101387.3"/>
</dbReference>
<dbReference type="SMR" id="Q5Q0H2"/>
<dbReference type="FunCoup" id="Q5Q0H2">
    <property type="interactions" value="2"/>
</dbReference>
<dbReference type="STRING" id="3702.Q5Q0H2"/>
<dbReference type="GlyCosmos" id="Q5Q0H2">
    <property type="glycosylation" value="2 sites, No reported glycans"/>
</dbReference>
<dbReference type="GlyGen" id="Q5Q0H2">
    <property type="glycosylation" value="2 sites"/>
</dbReference>
<dbReference type="PaxDb" id="3702-AT1G15190.1"/>
<dbReference type="EnsemblPlants" id="AT1G15190.1">
    <property type="protein sequence ID" value="AT1G15190.1"/>
    <property type="gene ID" value="AT1G15190"/>
</dbReference>
<dbReference type="GeneID" id="838085"/>
<dbReference type="Gramene" id="AT1G15190.1">
    <property type="protein sequence ID" value="AT1G15190.1"/>
    <property type="gene ID" value="AT1G15190"/>
</dbReference>
<dbReference type="KEGG" id="ath:AT1G15190"/>
<dbReference type="Araport" id="AT1G15190"/>
<dbReference type="TAIR" id="AT1G15190">
    <property type="gene designation" value="FLA19"/>
</dbReference>
<dbReference type="eggNOG" id="ENOG502S47X">
    <property type="taxonomic scope" value="Eukaryota"/>
</dbReference>
<dbReference type="HOGENOM" id="CLU_099593_0_0_1"/>
<dbReference type="InParanoid" id="Q5Q0H2"/>
<dbReference type="OMA" id="FDGQHIA"/>
<dbReference type="PhylomeDB" id="Q5Q0H2"/>
<dbReference type="PRO" id="PR:Q5Q0H2"/>
<dbReference type="Proteomes" id="UP000006548">
    <property type="component" value="Chromosome 1"/>
</dbReference>
<dbReference type="ExpressionAtlas" id="Q5Q0H2">
    <property type="expression patterns" value="baseline and differential"/>
</dbReference>
<dbReference type="GO" id="GO:0005576">
    <property type="term" value="C:extracellular region"/>
    <property type="evidence" value="ECO:0007669"/>
    <property type="project" value="UniProtKB-SubCell"/>
</dbReference>
<dbReference type="InterPro" id="IPR036378">
    <property type="entry name" value="FAS1_dom_sf"/>
</dbReference>
<dbReference type="InterPro" id="IPR000782">
    <property type="entry name" value="FAS1_domain"/>
</dbReference>
<dbReference type="InterPro" id="IPR052806">
    <property type="entry name" value="Fasciclin-like_AGP"/>
</dbReference>
<dbReference type="PANTHER" id="PTHR33985:SF15">
    <property type="entry name" value="FASCICLIN-LIKE ARABINOGALACTAN PROTEIN 19"/>
    <property type="match status" value="1"/>
</dbReference>
<dbReference type="PANTHER" id="PTHR33985">
    <property type="entry name" value="OS02G0491300 PROTEIN-RELATED"/>
    <property type="match status" value="1"/>
</dbReference>
<dbReference type="SMART" id="SM00554">
    <property type="entry name" value="FAS1"/>
    <property type="match status" value="1"/>
</dbReference>
<dbReference type="SUPFAM" id="SSF82153">
    <property type="entry name" value="FAS1 domain"/>
    <property type="match status" value="1"/>
</dbReference>
<dbReference type="PROSITE" id="PS50213">
    <property type="entry name" value="FAS1"/>
    <property type="match status" value="1"/>
</dbReference>
<comment type="function">
    <text>May be a cell surface adhesion protein.</text>
</comment>
<comment type="subcellular location">
    <subcellularLocation>
        <location evidence="4">Secreted</location>
    </subcellularLocation>
</comment>
<comment type="similarity">
    <text evidence="4">Belongs to the fasciclin-like AGP family.</text>
</comment>
<protein>
    <recommendedName>
        <fullName>Fasciclin-like arabinogalactan protein 19</fullName>
    </recommendedName>
</protein>
<reference key="1">
    <citation type="journal article" date="2000" name="Nature">
        <title>Sequence and analysis of chromosome 1 of the plant Arabidopsis thaliana.</title>
        <authorList>
            <person name="Theologis A."/>
            <person name="Ecker J.R."/>
            <person name="Palm C.J."/>
            <person name="Federspiel N.A."/>
            <person name="Kaul S."/>
            <person name="White O."/>
            <person name="Alonso J."/>
            <person name="Altafi H."/>
            <person name="Araujo R."/>
            <person name="Bowman C.L."/>
            <person name="Brooks S.Y."/>
            <person name="Buehler E."/>
            <person name="Chan A."/>
            <person name="Chao Q."/>
            <person name="Chen H."/>
            <person name="Cheuk R.F."/>
            <person name="Chin C.W."/>
            <person name="Chung M.K."/>
            <person name="Conn L."/>
            <person name="Conway A.B."/>
            <person name="Conway A.R."/>
            <person name="Creasy T.H."/>
            <person name="Dewar K."/>
            <person name="Dunn P."/>
            <person name="Etgu P."/>
            <person name="Feldblyum T.V."/>
            <person name="Feng J.-D."/>
            <person name="Fong B."/>
            <person name="Fujii C.Y."/>
            <person name="Gill J.E."/>
            <person name="Goldsmith A.D."/>
            <person name="Haas B."/>
            <person name="Hansen N.F."/>
            <person name="Hughes B."/>
            <person name="Huizar L."/>
            <person name="Hunter J.L."/>
            <person name="Jenkins J."/>
            <person name="Johnson-Hopson C."/>
            <person name="Khan S."/>
            <person name="Khaykin E."/>
            <person name="Kim C.J."/>
            <person name="Koo H.L."/>
            <person name="Kremenetskaia I."/>
            <person name="Kurtz D.B."/>
            <person name="Kwan A."/>
            <person name="Lam B."/>
            <person name="Langin-Hooper S."/>
            <person name="Lee A."/>
            <person name="Lee J.M."/>
            <person name="Lenz C.A."/>
            <person name="Li J.H."/>
            <person name="Li Y.-P."/>
            <person name="Lin X."/>
            <person name="Liu S.X."/>
            <person name="Liu Z.A."/>
            <person name="Luros J.S."/>
            <person name="Maiti R."/>
            <person name="Marziali A."/>
            <person name="Militscher J."/>
            <person name="Miranda M."/>
            <person name="Nguyen M."/>
            <person name="Nierman W.C."/>
            <person name="Osborne B.I."/>
            <person name="Pai G."/>
            <person name="Peterson J."/>
            <person name="Pham P.K."/>
            <person name="Rizzo M."/>
            <person name="Rooney T."/>
            <person name="Rowley D."/>
            <person name="Sakano H."/>
            <person name="Salzberg S.L."/>
            <person name="Schwartz J.R."/>
            <person name="Shinn P."/>
            <person name="Southwick A.M."/>
            <person name="Sun H."/>
            <person name="Tallon L.J."/>
            <person name="Tambunga G."/>
            <person name="Toriumi M.J."/>
            <person name="Town C.D."/>
            <person name="Utterback T."/>
            <person name="Van Aken S."/>
            <person name="Vaysberg M."/>
            <person name="Vysotskaia V.S."/>
            <person name="Walker M."/>
            <person name="Wu D."/>
            <person name="Yu G."/>
            <person name="Fraser C.M."/>
            <person name="Venter J.C."/>
            <person name="Davis R.W."/>
        </authorList>
    </citation>
    <scope>NUCLEOTIDE SEQUENCE [LARGE SCALE GENOMIC DNA]</scope>
    <source>
        <strain>cv. Columbia</strain>
    </source>
</reference>
<reference key="2">
    <citation type="journal article" date="2017" name="Plant J.">
        <title>Araport11: a complete reannotation of the Arabidopsis thaliana reference genome.</title>
        <authorList>
            <person name="Cheng C.Y."/>
            <person name="Krishnakumar V."/>
            <person name="Chan A.P."/>
            <person name="Thibaud-Nissen F."/>
            <person name="Schobel S."/>
            <person name="Town C.D."/>
        </authorList>
    </citation>
    <scope>GENOME REANNOTATION</scope>
    <source>
        <strain>cv. Columbia</strain>
    </source>
</reference>
<reference key="3">
    <citation type="submission" date="2005-02" db="EMBL/GenBank/DDBJ databases">
        <authorList>
            <person name="Underwood B.A."/>
            <person name="Xiao Y.-L."/>
            <person name="Moskal W.A. Jr."/>
            <person name="Monaghan E.L."/>
            <person name="Wang W."/>
            <person name="Redman J.C."/>
            <person name="Wu H.C."/>
            <person name="Utterback T."/>
            <person name="Town C.D."/>
        </authorList>
    </citation>
    <scope>NUCLEOTIDE SEQUENCE [LARGE SCALE GENOMIC DNA]</scope>
    <source>
        <strain>cv. Columbia</strain>
    </source>
</reference>
<reference key="4">
    <citation type="submission" date="2004-10" db="EMBL/GenBank/DDBJ databases">
        <title>Reconstruction of cDNA sequences for hypothetical genes in Arabidopsis thaliana from 5' and 3' RACE products.</title>
        <authorList>
            <person name="Xiao Y.-L."/>
            <person name="Underwood B.A."/>
            <person name="Moskal W.A. Jr."/>
            <person name="Wang W."/>
            <person name="Redman J.C."/>
            <person name="Wu H.C."/>
            <person name="Utterback T."/>
            <person name="Town C.D."/>
        </authorList>
    </citation>
    <scope>NUCLEOTIDE SEQUENCE [LARGE SCALE MRNA]</scope>
    <source>
        <strain>cv. Columbia</strain>
    </source>
</reference>
<reference key="5">
    <citation type="journal article" date="2003" name="Plant Physiol.">
        <title>The fasciclin-like arabinogalactan proteins of Arabidopsis. A multigene family of putative cell adhesion molecules.</title>
        <authorList>
            <person name="Johnson K.L."/>
            <person name="Jones B.J."/>
            <person name="Bacic A."/>
            <person name="Schultz C.J."/>
        </authorList>
    </citation>
    <scope>GENE FAMILY ORGANIZATION</scope>
    <scope>NOMENCLATURE</scope>
</reference>
<evidence type="ECO:0000255" key="1"/>
<evidence type="ECO:0000255" key="2">
    <source>
        <dbReference type="PROSITE-ProRule" id="PRU00082"/>
    </source>
</evidence>
<evidence type="ECO:0000256" key="3">
    <source>
        <dbReference type="SAM" id="MobiDB-lite"/>
    </source>
</evidence>
<evidence type="ECO:0000305" key="4"/>
<feature type="signal peptide" evidence="1">
    <location>
        <begin position="1"/>
        <end position="29"/>
    </location>
</feature>
<feature type="chain" id="PRO_0000253879" description="Fasciclin-like arabinogalactan protein 19">
    <location>
        <begin position="30"/>
        <end position="248"/>
    </location>
</feature>
<feature type="domain" description="FAS1" evidence="2">
    <location>
        <begin position="35"/>
        <end position="166"/>
    </location>
</feature>
<feature type="region of interest" description="Disordered" evidence="3">
    <location>
        <begin position="213"/>
        <end position="248"/>
    </location>
</feature>
<feature type="compositionally biased region" description="Low complexity" evidence="3">
    <location>
        <begin position="213"/>
        <end position="226"/>
    </location>
</feature>
<feature type="glycosylation site" description="N-linked (GlcNAc...) asparagine" evidence="1">
    <location>
        <position position="114"/>
    </location>
</feature>
<feature type="glycosylation site" description="N-linked (GlcNAc...) asparagine" evidence="1">
    <location>
        <position position="136"/>
    </location>
</feature>
<keyword id="KW-0325">Glycoprotein</keyword>
<keyword id="KW-0654">Proteoglycan</keyword>
<keyword id="KW-1185">Reference proteome</keyword>
<keyword id="KW-0964">Secreted</keyword>
<keyword id="KW-0732">Signal</keyword>
<name>FLA19_ARATH</name>
<organism>
    <name type="scientific">Arabidopsis thaliana</name>
    <name type="common">Mouse-ear cress</name>
    <dbReference type="NCBI Taxonomy" id="3702"/>
    <lineage>
        <taxon>Eukaryota</taxon>
        <taxon>Viridiplantae</taxon>
        <taxon>Streptophyta</taxon>
        <taxon>Embryophyta</taxon>
        <taxon>Tracheophyta</taxon>
        <taxon>Spermatophyta</taxon>
        <taxon>Magnoliopsida</taxon>
        <taxon>eudicotyledons</taxon>
        <taxon>Gunneridae</taxon>
        <taxon>Pentapetalae</taxon>
        <taxon>rosids</taxon>
        <taxon>malvids</taxon>
        <taxon>Brassicales</taxon>
        <taxon>Brassicaceae</taxon>
        <taxon>Camelineae</taxon>
        <taxon>Arabidopsis</taxon>
    </lineage>
</organism>
<gene>
    <name type="primary">FLA19</name>
    <name type="ordered locus">At1g15190</name>
    <name type="ORF">F9L1.13</name>
</gene>